<reference key="1">
    <citation type="submission" date="2007-10" db="EMBL/GenBank/DDBJ databases">
        <title>Complete sequence of chromosome 1 of Burkholderia multivorans ATCC 17616.</title>
        <authorList>
            <person name="Copeland A."/>
            <person name="Lucas S."/>
            <person name="Lapidus A."/>
            <person name="Barry K."/>
            <person name="Glavina del Rio T."/>
            <person name="Dalin E."/>
            <person name="Tice H."/>
            <person name="Pitluck S."/>
            <person name="Chain P."/>
            <person name="Malfatti S."/>
            <person name="Shin M."/>
            <person name="Vergez L."/>
            <person name="Schmutz J."/>
            <person name="Larimer F."/>
            <person name="Land M."/>
            <person name="Hauser L."/>
            <person name="Kyrpides N."/>
            <person name="Kim E."/>
            <person name="Tiedje J."/>
            <person name="Richardson P."/>
        </authorList>
    </citation>
    <scope>NUCLEOTIDE SEQUENCE [LARGE SCALE GENOMIC DNA]</scope>
    <source>
        <strain>ATCC 17616 / 249</strain>
    </source>
</reference>
<reference key="2">
    <citation type="submission" date="2007-04" db="EMBL/GenBank/DDBJ databases">
        <title>Complete genome sequence of Burkholderia multivorans ATCC 17616.</title>
        <authorList>
            <person name="Ohtsubo Y."/>
            <person name="Yamashita A."/>
            <person name="Kurokawa K."/>
            <person name="Takami H."/>
            <person name="Yuhara S."/>
            <person name="Nishiyama E."/>
            <person name="Endo R."/>
            <person name="Miyazaki R."/>
            <person name="Ono A."/>
            <person name="Yano K."/>
            <person name="Ito M."/>
            <person name="Sota M."/>
            <person name="Yuji N."/>
            <person name="Hattori M."/>
            <person name="Tsuda M."/>
        </authorList>
    </citation>
    <scope>NUCLEOTIDE SEQUENCE [LARGE SCALE GENOMIC DNA]</scope>
    <source>
        <strain>ATCC 17616 / 249</strain>
    </source>
</reference>
<dbReference type="EC" id="2.1.1.228" evidence="1"/>
<dbReference type="EMBL" id="CP000868">
    <property type="protein sequence ID" value="ABX15917.1"/>
    <property type="molecule type" value="Genomic_DNA"/>
</dbReference>
<dbReference type="EMBL" id="AP009385">
    <property type="protein sequence ID" value="BAG42953.1"/>
    <property type="molecule type" value="Genomic_DNA"/>
</dbReference>
<dbReference type="RefSeq" id="WP_006400700.1">
    <property type="nucleotide sequence ID" value="NC_010804.1"/>
</dbReference>
<dbReference type="SMR" id="A9ADS9"/>
<dbReference type="STRING" id="395019.BMULJ_01007"/>
<dbReference type="GeneID" id="89569367"/>
<dbReference type="KEGG" id="bmj:BMULJ_01007"/>
<dbReference type="KEGG" id="bmu:Bmul_2232"/>
<dbReference type="eggNOG" id="COG0336">
    <property type="taxonomic scope" value="Bacteria"/>
</dbReference>
<dbReference type="HOGENOM" id="CLU_047363_0_2_4"/>
<dbReference type="Proteomes" id="UP000008815">
    <property type="component" value="Chromosome 1"/>
</dbReference>
<dbReference type="GO" id="GO:0005829">
    <property type="term" value="C:cytosol"/>
    <property type="evidence" value="ECO:0007669"/>
    <property type="project" value="TreeGrafter"/>
</dbReference>
<dbReference type="GO" id="GO:0052906">
    <property type="term" value="F:tRNA (guanine(37)-N1)-methyltransferase activity"/>
    <property type="evidence" value="ECO:0007669"/>
    <property type="project" value="UniProtKB-UniRule"/>
</dbReference>
<dbReference type="GO" id="GO:0002939">
    <property type="term" value="P:tRNA N1-guanine methylation"/>
    <property type="evidence" value="ECO:0007669"/>
    <property type="project" value="TreeGrafter"/>
</dbReference>
<dbReference type="CDD" id="cd18080">
    <property type="entry name" value="TrmD-like"/>
    <property type="match status" value="1"/>
</dbReference>
<dbReference type="FunFam" id="1.10.1270.20:FF:000001">
    <property type="entry name" value="tRNA (guanine-N(1)-)-methyltransferase"/>
    <property type="match status" value="1"/>
</dbReference>
<dbReference type="FunFam" id="3.40.1280.10:FF:000001">
    <property type="entry name" value="tRNA (guanine-N(1)-)-methyltransferase"/>
    <property type="match status" value="1"/>
</dbReference>
<dbReference type="Gene3D" id="3.40.1280.10">
    <property type="match status" value="1"/>
</dbReference>
<dbReference type="Gene3D" id="1.10.1270.20">
    <property type="entry name" value="tRNA(m1g37)methyltransferase, domain 2"/>
    <property type="match status" value="1"/>
</dbReference>
<dbReference type="HAMAP" id="MF_00605">
    <property type="entry name" value="TrmD"/>
    <property type="match status" value="1"/>
</dbReference>
<dbReference type="InterPro" id="IPR029028">
    <property type="entry name" value="Alpha/beta_knot_MTases"/>
</dbReference>
<dbReference type="InterPro" id="IPR023148">
    <property type="entry name" value="tRNA_m1G_MeTrfase_C_sf"/>
</dbReference>
<dbReference type="InterPro" id="IPR002649">
    <property type="entry name" value="tRNA_m1G_MeTrfase_TrmD"/>
</dbReference>
<dbReference type="InterPro" id="IPR029026">
    <property type="entry name" value="tRNA_m1G_MTases_N"/>
</dbReference>
<dbReference type="InterPro" id="IPR016009">
    <property type="entry name" value="tRNA_MeTrfase_TRMD/TRM10"/>
</dbReference>
<dbReference type="NCBIfam" id="NF000648">
    <property type="entry name" value="PRK00026.1"/>
    <property type="match status" value="1"/>
</dbReference>
<dbReference type="NCBIfam" id="TIGR00088">
    <property type="entry name" value="trmD"/>
    <property type="match status" value="1"/>
</dbReference>
<dbReference type="PANTHER" id="PTHR46417">
    <property type="entry name" value="TRNA (GUANINE-N(1)-)-METHYLTRANSFERASE"/>
    <property type="match status" value="1"/>
</dbReference>
<dbReference type="PANTHER" id="PTHR46417:SF1">
    <property type="entry name" value="TRNA (GUANINE-N(1)-)-METHYLTRANSFERASE"/>
    <property type="match status" value="1"/>
</dbReference>
<dbReference type="Pfam" id="PF01746">
    <property type="entry name" value="tRNA_m1G_MT"/>
    <property type="match status" value="1"/>
</dbReference>
<dbReference type="PIRSF" id="PIRSF000386">
    <property type="entry name" value="tRNA_mtase"/>
    <property type="match status" value="1"/>
</dbReference>
<dbReference type="SUPFAM" id="SSF75217">
    <property type="entry name" value="alpha/beta knot"/>
    <property type="match status" value="1"/>
</dbReference>
<keyword id="KW-0963">Cytoplasm</keyword>
<keyword id="KW-0489">Methyltransferase</keyword>
<keyword id="KW-1185">Reference proteome</keyword>
<keyword id="KW-0949">S-adenosyl-L-methionine</keyword>
<keyword id="KW-0808">Transferase</keyword>
<keyword id="KW-0819">tRNA processing</keyword>
<gene>
    <name evidence="1" type="primary">trmD</name>
    <name type="ordered locus">Bmul_2232</name>
    <name type="ordered locus">BMULJ_01007</name>
</gene>
<evidence type="ECO:0000255" key="1">
    <source>
        <dbReference type="HAMAP-Rule" id="MF_00605"/>
    </source>
</evidence>
<proteinExistence type="inferred from homology"/>
<name>TRMD_BURM1</name>
<comment type="function">
    <text evidence="1">Specifically methylates guanosine-37 in various tRNAs.</text>
</comment>
<comment type="catalytic activity">
    <reaction evidence="1">
        <text>guanosine(37) in tRNA + S-adenosyl-L-methionine = N(1)-methylguanosine(37) in tRNA + S-adenosyl-L-homocysteine + H(+)</text>
        <dbReference type="Rhea" id="RHEA:36899"/>
        <dbReference type="Rhea" id="RHEA-COMP:10145"/>
        <dbReference type="Rhea" id="RHEA-COMP:10147"/>
        <dbReference type="ChEBI" id="CHEBI:15378"/>
        <dbReference type="ChEBI" id="CHEBI:57856"/>
        <dbReference type="ChEBI" id="CHEBI:59789"/>
        <dbReference type="ChEBI" id="CHEBI:73542"/>
        <dbReference type="ChEBI" id="CHEBI:74269"/>
        <dbReference type="EC" id="2.1.1.228"/>
    </reaction>
</comment>
<comment type="subunit">
    <text evidence="1">Homodimer.</text>
</comment>
<comment type="subcellular location">
    <subcellularLocation>
        <location evidence="1">Cytoplasm</location>
    </subcellularLocation>
</comment>
<comment type="similarity">
    <text evidence="1">Belongs to the RNA methyltransferase TrmD family.</text>
</comment>
<accession>A9ADS9</accession>
<organism>
    <name type="scientific">Burkholderia multivorans (strain ATCC 17616 / 249)</name>
    <dbReference type="NCBI Taxonomy" id="395019"/>
    <lineage>
        <taxon>Bacteria</taxon>
        <taxon>Pseudomonadati</taxon>
        <taxon>Pseudomonadota</taxon>
        <taxon>Betaproteobacteria</taxon>
        <taxon>Burkholderiales</taxon>
        <taxon>Burkholderiaceae</taxon>
        <taxon>Burkholderia</taxon>
        <taxon>Burkholderia cepacia complex</taxon>
    </lineage>
</organism>
<protein>
    <recommendedName>
        <fullName evidence="1">tRNA (guanine-N(1)-)-methyltransferase</fullName>
        <ecNumber evidence="1">2.1.1.228</ecNumber>
    </recommendedName>
    <alternativeName>
        <fullName evidence="1">M1G-methyltransferase</fullName>
    </alternativeName>
    <alternativeName>
        <fullName evidence="1">tRNA [GM37] methyltransferase</fullName>
    </alternativeName>
</protein>
<sequence>MNQVTERAVQFDVVTLFPEMFRALTDWGITSRAVKQGRFGLRTWNPRDFTTDNYRTVDDRPYGGGPGMVMLARPLEAAIGAAKAAQAEQGIASTRVVMMSPQGAPLTHERVTRMAQEPGVVVLCGRYEAIDQRLLDRCVDEEISLGDFVLSGGELPAMAMMDAVVRLLPGVLNDAQSAVQDSFVDGLLDCPHYTRPEEYEGMRVPDVLLGGHHAEIERWRRQEALRNTWRKRPDLIVRARREKLLSRADEAWLANLAREAKDAS</sequence>
<feature type="chain" id="PRO_1000130144" description="tRNA (guanine-N(1)-)-methyltransferase">
    <location>
        <begin position="1"/>
        <end position="264"/>
    </location>
</feature>
<feature type="binding site" evidence="1">
    <location>
        <position position="125"/>
    </location>
    <ligand>
        <name>S-adenosyl-L-methionine</name>
        <dbReference type="ChEBI" id="CHEBI:59789"/>
    </ligand>
</feature>
<feature type="binding site" evidence="1">
    <location>
        <begin position="145"/>
        <end position="150"/>
    </location>
    <ligand>
        <name>S-adenosyl-L-methionine</name>
        <dbReference type="ChEBI" id="CHEBI:59789"/>
    </ligand>
</feature>